<gene>
    <name type="primary">pvdQ</name>
    <name type="ordered locus">PSPTO_2161</name>
</gene>
<organism>
    <name type="scientific">Pseudomonas syringae pv. tomato (strain ATCC BAA-871 / DC3000)</name>
    <dbReference type="NCBI Taxonomy" id="223283"/>
    <lineage>
        <taxon>Bacteria</taxon>
        <taxon>Pseudomonadati</taxon>
        <taxon>Pseudomonadota</taxon>
        <taxon>Gammaproteobacteria</taxon>
        <taxon>Pseudomonadales</taxon>
        <taxon>Pseudomonadaceae</taxon>
        <taxon>Pseudomonas</taxon>
    </lineage>
</organism>
<reference key="1">
    <citation type="journal article" date="2003" name="Proc. Natl. Acad. Sci. U.S.A.">
        <title>The complete genome sequence of the Arabidopsis and tomato pathogen Pseudomonas syringae pv. tomato DC3000.</title>
        <authorList>
            <person name="Buell C.R."/>
            <person name="Joardar V."/>
            <person name="Lindeberg M."/>
            <person name="Selengut J."/>
            <person name="Paulsen I.T."/>
            <person name="Gwinn M.L."/>
            <person name="Dodson R.J."/>
            <person name="DeBoy R.T."/>
            <person name="Durkin A.S."/>
            <person name="Kolonay J.F."/>
            <person name="Madupu R."/>
            <person name="Daugherty S.C."/>
            <person name="Brinkac L.M."/>
            <person name="Beanan M.J."/>
            <person name="Haft D.H."/>
            <person name="Nelson W.C."/>
            <person name="Davidsen T.M."/>
            <person name="Zafar N."/>
            <person name="Zhou L."/>
            <person name="Liu J."/>
            <person name="Yuan Q."/>
            <person name="Khouri H.M."/>
            <person name="Fedorova N.B."/>
            <person name="Tran B."/>
            <person name="Russell D."/>
            <person name="Berry K.J."/>
            <person name="Utterback T.R."/>
            <person name="Van Aken S.E."/>
            <person name="Feldblyum T.V."/>
            <person name="D'Ascenzo M."/>
            <person name="Deng W.-L."/>
            <person name="Ramos A.R."/>
            <person name="Alfano J.R."/>
            <person name="Cartinhour S."/>
            <person name="Chatterjee A.K."/>
            <person name="Delaney T.P."/>
            <person name="Lazarowitz S.G."/>
            <person name="Martin G.B."/>
            <person name="Schneider D.J."/>
            <person name="Tang X."/>
            <person name="Bender C.L."/>
            <person name="White O."/>
            <person name="Fraser C.M."/>
            <person name="Collmer A."/>
        </authorList>
    </citation>
    <scope>NUCLEOTIDE SEQUENCE [LARGE SCALE GENOMIC DNA]</scope>
    <source>
        <strain>ATCC BAA-871 / DC3000</strain>
    </source>
</reference>
<sequence>MSRALPGFLFAGLSVAVVLPAQALVAHEQKAAGAEIRRTGFGVPHIVADDERGLGYGIGYAYAQDNLCLLANEVVTVNGERSRYFGPDKATLEQRNNMASDLLFKWLNTPQALADFWKAQPAEIRHLMQGYVAGYNRSLAEQTTQGLPQPCAAEWVRPISTDDLVRLTRRLLVEGGVGQFTEAFAGAKPPSTQKPLQVDSQQVQALQLAAARNERFALERGSNAVAVGRDLSANGRGMLLANPHFPWGGGMRFYQMHLTIPGKLDVMGAALPGLPLINIGFNQHLAWSHTVDTSKHFTLHRLQLDPKDSTRYLLDGKSVAMGKQQVSVEVKQADGTLKAVPRIIYSSKFGPVVQWPGKLDWDDKFAFSLRDANLKNDRVLQQWYAMDQADSLKAFQDSVHRIQGIPWVNTLAVDAKGQALYMNISVVPNVDAVKLARCSDPRIGTELIVLDGSRSECNWDVSPEAAQAGIYPSSRQPQLLRTDFVQHSNDSAWMVNPAAPLKDFSPLISQDGQPLGQRARFALDRLSSLEKTGKVSVENLQAMVMDNEVYHAGQVLPDLLKFCASELGDDAARLAPLCTALKAWDGRADLNSGIGFVYFQRIVTSMQAVASRWRVVFDPQNPVHTPSGLAIEYPEVATALRAAMLAAVDEVAKAGLSADTRWGDIQVSSISGKPIPIHGGPAGLGIYNAMQTVAGRDGKREVVSGTSYLQVVTFDEHGPKAQGLLAFSESSNPQSAHSRDQTEAFSKKHWSVLPFTEQQIKADPAYQVQVVKE</sequence>
<evidence type="ECO:0000250" key="1"/>
<evidence type="ECO:0000255" key="2"/>
<evidence type="ECO:0000305" key="3"/>
<comment type="function">
    <text evidence="1">Catalyzes the deacylation of acyl-homoserine lactone (AHL or acyl-HSL), releasing homoserine lactone (HSL) and the corresponding fatty acid. Possesses a specificity for the degradation of long-chain acyl-HSLs (side chains of 11 to 14 carbons in length) (By similarity).</text>
</comment>
<comment type="catalytic activity">
    <reaction>
        <text>an N-acyl-L-homoserine lactone + H2O = L-homoserine lactone + a carboxylate</text>
        <dbReference type="Rhea" id="RHEA:18937"/>
        <dbReference type="ChEBI" id="CHEBI:15377"/>
        <dbReference type="ChEBI" id="CHEBI:29067"/>
        <dbReference type="ChEBI" id="CHEBI:55474"/>
        <dbReference type="ChEBI" id="CHEBI:58633"/>
        <dbReference type="EC" id="3.5.1.97"/>
    </reaction>
</comment>
<comment type="subunit">
    <text evidence="1">Heterodimer of an alpha subunit and a beta subunit processed from the same precursor.</text>
</comment>
<comment type="subcellular location">
    <subcellularLocation>
        <location evidence="1">Periplasm</location>
    </subcellularLocation>
</comment>
<comment type="miscellaneous">
    <text>AHL-mediated signaling mediates quorum sensing in many species of Proteobacteria, regulating hundreds of genes, including many that code for extracellular virulence factors.</text>
</comment>
<comment type="similarity">
    <text evidence="3">Belongs to the peptidase S45 family.</text>
</comment>
<keyword id="KW-0378">Hydrolase</keyword>
<keyword id="KW-0574">Periplasm</keyword>
<keyword id="KW-0673">Quorum sensing</keyword>
<keyword id="KW-1185">Reference proteome</keyword>
<keyword id="KW-0732">Signal</keyword>
<keyword id="KW-0865">Zymogen</keyword>
<protein>
    <recommendedName>
        <fullName>Acyl-homoserine lactone acylase PvdQ</fullName>
        <shortName>AHL acylase PvdQ</shortName>
        <shortName>Acyl-HSL acylase PvdQ</shortName>
        <ecNumber>3.5.1.97</ecNumber>
    </recommendedName>
    <component>
        <recommendedName>
            <fullName>Acyl-homoserine lactone acylase PvdQ subunit alpha</fullName>
            <shortName>Acyl-HSL acylase PvdQ subunit alpha</shortName>
        </recommendedName>
    </component>
    <component>
        <recommendedName>
            <fullName>Acyl-homoserine lactone acylase PvdQ subunit beta</fullName>
            <shortName>Acyl-HSL acylase PvdQ subunit beta</shortName>
        </recommendedName>
    </component>
</protein>
<dbReference type="EC" id="3.5.1.97"/>
<dbReference type="EMBL" id="AE016853">
    <property type="protein sequence ID" value="AAO55678.1"/>
    <property type="molecule type" value="Genomic_DNA"/>
</dbReference>
<dbReference type="RefSeq" id="NP_791983.1">
    <property type="nucleotide sequence ID" value="NC_004578.1"/>
</dbReference>
<dbReference type="RefSeq" id="WP_011103880.1">
    <property type="nucleotide sequence ID" value="NC_004578.1"/>
</dbReference>
<dbReference type="SMR" id="Q884D2"/>
<dbReference type="STRING" id="223283.PSPTO_2161"/>
<dbReference type="MEROPS" id="S45.004"/>
<dbReference type="GeneID" id="1183808"/>
<dbReference type="KEGG" id="pst:PSPTO_2161"/>
<dbReference type="PATRIC" id="fig|223283.9.peg.2192"/>
<dbReference type="eggNOG" id="COG2366">
    <property type="taxonomic scope" value="Bacteria"/>
</dbReference>
<dbReference type="HOGENOM" id="CLU_017615_0_0_6"/>
<dbReference type="OrthoDB" id="9760084at2"/>
<dbReference type="PhylomeDB" id="Q884D2"/>
<dbReference type="Proteomes" id="UP000002515">
    <property type="component" value="Chromosome"/>
</dbReference>
<dbReference type="GO" id="GO:0042597">
    <property type="term" value="C:periplasmic space"/>
    <property type="evidence" value="ECO:0007669"/>
    <property type="project" value="UniProtKB-SubCell"/>
</dbReference>
<dbReference type="GO" id="GO:0016811">
    <property type="term" value="F:hydrolase activity, acting on carbon-nitrogen (but not peptide) bonds, in linear amides"/>
    <property type="evidence" value="ECO:0007669"/>
    <property type="project" value="InterPro"/>
</dbReference>
<dbReference type="GO" id="GO:0017000">
    <property type="term" value="P:antibiotic biosynthetic process"/>
    <property type="evidence" value="ECO:0007669"/>
    <property type="project" value="InterPro"/>
</dbReference>
<dbReference type="GO" id="GO:0009372">
    <property type="term" value="P:quorum sensing"/>
    <property type="evidence" value="ECO:0007669"/>
    <property type="project" value="UniProtKB-KW"/>
</dbReference>
<dbReference type="CDD" id="cd01936">
    <property type="entry name" value="Ntn_CA"/>
    <property type="match status" value="1"/>
</dbReference>
<dbReference type="Gene3D" id="1.10.1400.10">
    <property type="match status" value="1"/>
</dbReference>
<dbReference type="Gene3D" id="2.30.120.10">
    <property type="match status" value="1"/>
</dbReference>
<dbReference type="Gene3D" id="3.60.20.10">
    <property type="entry name" value="Glutamine Phosphoribosylpyrophosphate, subunit 1, domain 1"/>
    <property type="match status" value="1"/>
</dbReference>
<dbReference type="Gene3D" id="1.10.439.10">
    <property type="entry name" value="Penicillin Amidohydrolase, domain 1"/>
    <property type="match status" value="1"/>
</dbReference>
<dbReference type="InterPro" id="IPR029055">
    <property type="entry name" value="Ntn_hydrolases_N"/>
</dbReference>
<dbReference type="InterPro" id="IPR043147">
    <property type="entry name" value="Penicillin_amidase_A-knob"/>
</dbReference>
<dbReference type="InterPro" id="IPR023343">
    <property type="entry name" value="Penicillin_amidase_dom1"/>
</dbReference>
<dbReference type="InterPro" id="IPR043146">
    <property type="entry name" value="Penicillin_amidase_N_B-knob"/>
</dbReference>
<dbReference type="InterPro" id="IPR002692">
    <property type="entry name" value="S45"/>
</dbReference>
<dbReference type="PANTHER" id="PTHR34218:SF3">
    <property type="entry name" value="ACYL-HOMOSERINE LACTONE ACYLASE PVDQ"/>
    <property type="match status" value="1"/>
</dbReference>
<dbReference type="PANTHER" id="PTHR34218">
    <property type="entry name" value="PEPTIDASE S45 PENICILLIN AMIDASE"/>
    <property type="match status" value="1"/>
</dbReference>
<dbReference type="Pfam" id="PF01804">
    <property type="entry name" value="Penicil_amidase"/>
    <property type="match status" value="1"/>
</dbReference>
<dbReference type="SUPFAM" id="SSF56235">
    <property type="entry name" value="N-terminal nucleophile aminohydrolases (Ntn hydrolases)"/>
    <property type="match status" value="1"/>
</dbReference>
<accession>Q884D2</accession>
<name>PVDQ_PSESM</name>
<proteinExistence type="inferred from homology"/>
<feature type="signal peptide" evidence="2">
    <location>
        <begin position="1"/>
        <end position="23"/>
    </location>
</feature>
<feature type="chain" id="PRO_0000253377" description="Acyl-homoserine lactone acylase PvdQ">
    <location>
        <begin position="24"/>
        <end position="773"/>
    </location>
</feature>
<feature type="chain" id="PRO_0000253378" description="Acyl-homoserine lactone acylase PvdQ subunit alpha">
    <location>
        <begin position="24"/>
        <end position="199" status="uncertain"/>
    </location>
</feature>
<feature type="propeptide" id="PRO_0000253379" description="Spacer peptide" evidence="1">
    <location>
        <begin position="200" status="uncertain"/>
        <end position="221"/>
    </location>
</feature>
<feature type="chain" id="PRO_0000253380" description="Acyl-homoserine lactone acylase PvdQ subunit beta">
    <location>
        <begin position="222"/>
        <end position="773"/>
    </location>
</feature>
<feature type="active site" description="Nucleophile" evidence="1">
    <location>
        <position position="222"/>
    </location>
</feature>